<keyword id="KW-0963">Cytoplasm</keyword>
<keyword id="KW-0342">GTP-binding</keyword>
<keyword id="KW-0460">Magnesium</keyword>
<keyword id="KW-0479">Metal-binding</keyword>
<keyword id="KW-0547">Nucleotide-binding</keyword>
<keyword id="KW-1185">Reference proteome</keyword>
<gene>
    <name evidence="1" type="primary">hflX</name>
    <name type="ordered locus">MJ1126</name>
</gene>
<evidence type="ECO:0000255" key="1">
    <source>
        <dbReference type="HAMAP-Rule" id="MF_00900"/>
    </source>
</evidence>
<name>HFLX_METJA</name>
<comment type="function">
    <text evidence="1">GTPase that associates with the 50S ribosomal subunit and may have a role during protein synthesis or ribosome biogenesis.</text>
</comment>
<comment type="cofactor">
    <cofactor evidence="1">
        <name>Mg(2+)</name>
        <dbReference type="ChEBI" id="CHEBI:18420"/>
    </cofactor>
</comment>
<comment type="subunit">
    <text evidence="1">Monomer. Associates with the 50S ribosomal subunit.</text>
</comment>
<comment type="subcellular location">
    <subcellularLocation>
        <location evidence="1">Cytoplasm</location>
    </subcellularLocation>
    <text evidence="1">May associate with membranes.</text>
</comment>
<comment type="similarity">
    <text evidence="1">Belongs to the TRAFAC class OBG-HflX-like GTPase superfamily. HflX GTPase family.</text>
</comment>
<dbReference type="EMBL" id="L77117">
    <property type="protein sequence ID" value="AAB99128.1"/>
    <property type="molecule type" value="Genomic_DNA"/>
</dbReference>
<dbReference type="PIR" id="E64440">
    <property type="entry name" value="E64440"/>
</dbReference>
<dbReference type="RefSeq" id="WP_010870637.1">
    <property type="nucleotide sequence ID" value="NC_000909.1"/>
</dbReference>
<dbReference type="SMR" id="Q58526"/>
<dbReference type="FunCoup" id="Q58526">
    <property type="interactions" value="78"/>
</dbReference>
<dbReference type="STRING" id="243232.MJ_1126"/>
<dbReference type="PaxDb" id="243232-MJ_1126"/>
<dbReference type="EnsemblBacteria" id="AAB99128">
    <property type="protein sequence ID" value="AAB99128"/>
    <property type="gene ID" value="MJ_1126"/>
</dbReference>
<dbReference type="GeneID" id="1452022"/>
<dbReference type="KEGG" id="mja:MJ_1126"/>
<dbReference type="eggNOG" id="arCOG00353">
    <property type="taxonomic scope" value="Archaea"/>
</dbReference>
<dbReference type="HOGENOM" id="CLU_019597_2_0_2"/>
<dbReference type="InParanoid" id="Q58526"/>
<dbReference type="OrthoDB" id="10150at2157"/>
<dbReference type="PhylomeDB" id="Q58526"/>
<dbReference type="Proteomes" id="UP000000805">
    <property type="component" value="Chromosome"/>
</dbReference>
<dbReference type="GO" id="GO:0005737">
    <property type="term" value="C:cytoplasm"/>
    <property type="evidence" value="ECO:0000318"/>
    <property type="project" value="GO_Central"/>
</dbReference>
<dbReference type="GO" id="GO:0005525">
    <property type="term" value="F:GTP binding"/>
    <property type="evidence" value="ECO:0007669"/>
    <property type="project" value="UniProtKB-UniRule"/>
</dbReference>
<dbReference type="GO" id="GO:0003924">
    <property type="term" value="F:GTPase activity"/>
    <property type="evidence" value="ECO:0007669"/>
    <property type="project" value="UniProtKB-UniRule"/>
</dbReference>
<dbReference type="GO" id="GO:0046872">
    <property type="term" value="F:metal ion binding"/>
    <property type="evidence" value="ECO:0007669"/>
    <property type="project" value="UniProtKB-KW"/>
</dbReference>
<dbReference type="GO" id="GO:0043022">
    <property type="term" value="F:ribosome binding"/>
    <property type="evidence" value="ECO:0000318"/>
    <property type="project" value="GO_Central"/>
</dbReference>
<dbReference type="CDD" id="cd01878">
    <property type="entry name" value="HflX"/>
    <property type="match status" value="1"/>
</dbReference>
<dbReference type="Gene3D" id="6.10.250.2860">
    <property type="match status" value="1"/>
</dbReference>
<dbReference type="Gene3D" id="3.40.50.11060">
    <property type="entry name" value="GTPase HflX, N-terminal domain"/>
    <property type="match status" value="1"/>
</dbReference>
<dbReference type="Gene3D" id="3.40.50.300">
    <property type="entry name" value="P-loop containing nucleotide triphosphate hydrolases"/>
    <property type="match status" value="1"/>
</dbReference>
<dbReference type="HAMAP" id="MF_00900">
    <property type="entry name" value="GTPase_HflX"/>
    <property type="match status" value="1"/>
</dbReference>
<dbReference type="InterPro" id="IPR030394">
    <property type="entry name" value="G_HFLX_dom"/>
</dbReference>
<dbReference type="InterPro" id="IPR006073">
    <property type="entry name" value="GTP-bd"/>
</dbReference>
<dbReference type="InterPro" id="IPR032305">
    <property type="entry name" value="GTP-bd_M"/>
</dbReference>
<dbReference type="InterPro" id="IPR016496">
    <property type="entry name" value="GTPase_HflX"/>
</dbReference>
<dbReference type="InterPro" id="IPR025121">
    <property type="entry name" value="GTPase_HflX_N"/>
</dbReference>
<dbReference type="InterPro" id="IPR042108">
    <property type="entry name" value="GTPase_HflX_N_sf"/>
</dbReference>
<dbReference type="InterPro" id="IPR027417">
    <property type="entry name" value="P-loop_NTPase"/>
</dbReference>
<dbReference type="InterPro" id="IPR005225">
    <property type="entry name" value="Small_GTP-bd"/>
</dbReference>
<dbReference type="NCBIfam" id="TIGR03156">
    <property type="entry name" value="GTP_HflX"/>
    <property type="match status" value="1"/>
</dbReference>
<dbReference type="NCBIfam" id="TIGR00231">
    <property type="entry name" value="small_GTP"/>
    <property type="match status" value="1"/>
</dbReference>
<dbReference type="PANTHER" id="PTHR10229">
    <property type="entry name" value="GTP-BINDING PROTEIN HFLX"/>
    <property type="match status" value="1"/>
</dbReference>
<dbReference type="PANTHER" id="PTHR10229:SF8">
    <property type="entry name" value="GTPASE HFLX"/>
    <property type="match status" value="1"/>
</dbReference>
<dbReference type="Pfam" id="PF16360">
    <property type="entry name" value="GTP-bdg_M"/>
    <property type="match status" value="1"/>
</dbReference>
<dbReference type="Pfam" id="PF13167">
    <property type="entry name" value="GTP-bdg_N"/>
    <property type="match status" value="1"/>
</dbReference>
<dbReference type="Pfam" id="PF01926">
    <property type="entry name" value="MMR_HSR1"/>
    <property type="match status" value="1"/>
</dbReference>
<dbReference type="PIRSF" id="PIRSF006809">
    <property type="entry name" value="GTP-binding_hflX_prd"/>
    <property type="match status" value="1"/>
</dbReference>
<dbReference type="PRINTS" id="PR00326">
    <property type="entry name" value="GTP1OBG"/>
</dbReference>
<dbReference type="SUPFAM" id="SSF52540">
    <property type="entry name" value="P-loop containing nucleoside triphosphate hydrolases"/>
    <property type="match status" value="1"/>
</dbReference>
<dbReference type="PROSITE" id="PS51705">
    <property type="entry name" value="G_HFLX"/>
    <property type="match status" value="1"/>
</dbReference>
<proteinExistence type="inferred from homology"/>
<accession>Q58526</accession>
<reference key="1">
    <citation type="journal article" date="1996" name="Science">
        <title>Complete genome sequence of the methanogenic archaeon, Methanococcus jannaschii.</title>
        <authorList>
            <person name="Bult C.J."/>
            <person name="White O."/>
            <person name="Olsen G.J."/>
            <person name="Zhou L."/>
            <person name="Fleischmann R.D."/>
            <person name="Sutton G.G."/>
            <person name="Blake J.A."/>
            <person name="FitzGerald L.M."/>
            <person name="Clayton R.A."/>
            <person name="Gocayne J.D."/>
            <person name="Kerlavage A.R."/>
            <person name="Dougherty B.A."/>
            <person name="Tomb J.-F."/>
            <person name="Adams M.D."/>
            <person name="Reich C.I."/>
            <person name="Overbeek R."/>
            <person name="Kirkness E.F."/>
            <person name="Weinstock K.G."/>
            <person name="Merrick J.M."/>
            <person name="Glodek A."/>
            <person name="Scott J.L."/>
            <person name="Geoghagen N.S.M."/>
            <person name="Weidman J.F."/>
            <person name="Fuhrmann J.L."/>
            <person name="Nguyen D."/>
            <person name="Utterback T.R."/>
            <person name="Kelley J.M."/>
            <person name="Peterson J.D."/>
            <person name="Sadow P.W."/>
            <person name="Hanna M.C."/>
            <person name="Cotton M.D."/>
            <person name="Roberts K.M."/>
            <person name="Hurst M.A."/>
            <person name="Kaine B.P."/>
            <person name="Borodovsky M."/>
            <person name="Klenk H.-P."/>
            <person name="Fraser C.M."/>
            <person name="Smith H.O."/>
            <person name="Woese C.R."/>
            <person name="Venter J.C."/>
        </authorList>
    </citation>
    <scope>NUCLEOTIDE SEQUENCE [LARGE SCALE GENOMIC DNA]</scope>
    <source>
        <strain>ATCC 43067 / DSM 2661 / JAL-1 / JCM 10045 / NBRC 100440</strain>
    </source>
</reference>
<sequence>MLILRKDSKFDRKSIEELKELAEVLYNPVKTIVQIRKADPKYQIGSGLVERIAENIKEENIEIVIVGNILTPSQKYNLAKKFKVEVIDKIELVLRIFYKHARTKEAQLQVRLAELQYELPRAREKVRLAKMGEQPGFGGYGDYEVEKYYQKVKREIATIKRKLEKLREHRRVARKGRAKFDTVGLIGYTNAGKTSLLNALTGENKESKNQVFTTLTTTTRAIKGIKRKILVTDTVGFIDDLPPFMIEAFLSTIEESADSDLILIVVDASDDIEEIKRKLKVNHEILSKINCKAPIITVFNKVDKITKEKKRKILEELDRYIVNPIFVSAKYDINMDLLKEMIIEHLNLSIGTIETDNPRLISYLYENTEIIEDILEDNKHIITFRAKERDVNRILKLHKSAV</sequence>
<protein>
    <recommendedName>
        <fullName evidence="1">GTPase HflX</fullName>
    </recommendedName>
    <alternativeName>
        <fullName evidence="1">GTP-binding protein HflX</fullName>
    </alternativeName>
</protein>
<feature type="chain" id="PRO_0000205444" description="GTPase HflX">
    <location>
        <begin position="1"/>
        <end position="402"/>
    </location>
</feature>
<feature type="domain" description="Hflx-type G" evidence="1">
    <location>
        <begin position="181"/>
        <end position="350"/>
    </location>
</feature>
<feature type="binding site" evidence="1">
    <location>
        <begin position="187"/>
        <end position="194"/>
    </location>
    <ligand>
        <name>GTP</name>
        <dbReference type="ChEBI" id="CHEBI:37565"/>
    </ligand>
</feature>
<feature type="binding site" evidence="1">
    <location>
        <position position="194"/>
    </location>
    <ligand>
        <name>Mg(2+)</name>
        <dbReference type="ChEBI" id="CHEBI:18420"/>
    </ligand>
</feature>
<feature type="binding site" evidence="1">
    <location>
        <begin position="212"/>
        <end position="216"/>
    </location>
    <ligand>
        <name>GTP</name>
        <dbReference type="ChEBI" id="CHEBI:37565"/>
    </ligand>
</feature>
<feature type="binding site" evidence="1">
    <location>
        <position position="214"/>
    </location>
    <ligand>
        <name>Mg(2+)</name>
        <dbReference type="ChEBI" id="CHEBI:18420"/>
    </ligand>
</feature>
<feature type="binding site" evidence="1">
    <location>
        <begin position="233"/>
        <end position="236"/>
    </location>
    <ligand>
        <name>GTP</name>
        <dbReference type="ChEBI" id="CHEBI:37565"/>
    </ligand>
</feature>
<feature type="binding site" evidence="1">
    <location>
        <begin position="300"/>
        <end position="303"/>
    </location>
    <ligand>
        <name>GTP</name>
        <dbReference type="ChEBI" id="CHEBI:37565"/>
    </ligand>
</feature>
<feature type="binding site" evidence="1">
    <location>
        <begin position="328"/>
        <end position="330"/>
    </location>
    <ligand>
        <name>GTP</name>
        <dbReference type="ChEBI" id="CHEBI:37565"/>
    </ligand>
</feature>
<organism>
    <name type="scientific">Methanocaldococcus jannaschii (strain ATCC 43067 / DSM 2661 / JAL-1 / JCM 10045 / NBRC 100440)</name>
    <name type="common">Methanococcus jannaschii</name>
    <dbReference type="NCBI Taxonomy" id="243232"/>
    <lineage>
        <taxon>Archaea</taxon>
        <taxon>Methanobacteriati</taxon>
        <taxon>Methanobacteriota</taxon>
        <taxon>Methanomada group</taxon>
        <taxon>Methanococci</taxon>
        <taxon>Methanococcales</taxon>
        <taxon>Methanocaldococcaceae</taxon>
        <taxon>Methanocaldococcus</taxon>
    </lineage>
</organism>